<gene>
    <name type="primary">Defa17</name>
    <name type="synonym">Defcr17</name>
</gene>
<organism>
    <name type="scientific">Mus musculus</name>
    <name type="common">Mouse</name>
    <dbReference type="NCBI Taxonomy" id="10090"/>
    <lineage>
        <taxon>Eukaryota</taxon>
        <taxon>Metazoa</taxon>
        <taxon>Chordata</taxon>
        <taxon>Craniata</taxon>
        <taxon>Vertebrata</taxon>
        <taxon>Euteleostomi</taxon>
        <taxon>Mammalia</taxon>
        <taxon>Eutheria</taxon>
        <taxon>Euarchontoglires</taxon>
        <taxon>Glires</taxon>
        <taxon>Rodentia</taxon>
        <taxon>Myomorpha</taxon>
        <taxon>Muroidea</taxon>
        <taxon>Muridae</taxon>
        <taxon>Murinae</taxon>
        <taxon>Mus</taxon>
        <taxon>Mus</taxon>
    </lineage>
</organism>
<keyword id="KW-0044">Antibiotic</keyword>
<keyword id="KW-0929">Antimicrobial</keyword>
<keyword id="KW-0211">Defensin</keyword>
<keyword id="KW-1015">Disulfide bond</keyword>
<keyword id="KW-1185">Reference proteome</keyword>
<keyword id="KW-0964">Secreted</keyword>
<keyword id="KW-0732">Signal</keyword>
<comment type="function">
    <text>Probably contributes to the antimicrobial barrier function of the small bowel mucosa.</text>
</comment>
<comment type="subcellular location">
    <subcellularLocation>
        <location>Secreted</location>
    </subcellularLocation>
</comment>
<comment type="similarity">
    <text evidence="4">Belongs to the alpha-defensin family.</text>
</comment>
<evidence type="ECO:0000250" key="1"/>
<evidence type="ECO:0000255" key="2"/>
<evidence type="ECO:0000256" key="3">
    <source>
        <dbReference type="SAM" id="MobiDB-lite"/>
    </source>
</evidence>
<evidence type="ECO:0000305" key="4"/>
<sequence>LLAFQVQADPIQNTDEETKTEEQPGEEDQAVSVSFGDPEGTSLQEESLRDLVCYCRKRGCKRREHMNGTCRKGHLLYTLCCR</sequence>
<protein>
    <recommendedName>
        <fullName>Alpha-defensin 17</fullName>
    </recommendedName>
    <alternativeName>
        <fullName>Defensin-related cryptdin-17</fullName>
        <shortName>CRYP17</shortName>
    </alternativeName>
</protein>
<accession>Q64016</accession>
<reference key="1">
    <citation type="journal article" date="1994" name="Infect. Immun.">
        <title>Mouse Paneth cell defensins: primary structures and antibacterial activities of numerous cryptdin isoforms.</title>
        <authorList>
            <person name="Ouellette A.J."/>
            <person name="Hsieh M.M."/>
            <person name="Nosek M.T."/>
            <person name="Cano-Gauci D.F."/>
            <person name="Huttner K.M."/>
            <person name="Buick R.N."/>
            <person name="Selsted M.E."/>
        </authorList>
    </citation>
    <scope>NUCLEOTIDE SEQUENCE [MRNA]</scope>
    <source>
        <strain>CD-1</strain>
        <tissue>Intestinal crypt</tissue>
    </source>
</reference>
<dbReference type="EMBL" id="S73391">
    <property type="protein sequence ID" value="AAB32271.2"/>
    <property type="status" value="ALT_SEQ"/>
    <property type="molecule type" value="mRNA"/>
</dbReference>
<dbReference type="SMR" id="Q64016"/>
<dbReference type="FunCoup" id="Q64016">
    <property type="interactions" value="41"/>
</dbReference>
<dbReference type="PeptideAtlas" id="Q64016"/>
<dbReference type="AGR" id="MGI:1345152"/>
<dbReference type="MGI" id="MGI:1345152">
    <property type="gene designation" value="Defa17"/>
</dbReference>
<dbReference type="InParanoid" id="Q64016"/>
<dbReference type="Reactome" id="R-MMU-1461973">
    <property type="pathway name" value="Defensins"/>
</dbReference>
<dbReference type="Reactome" id="R-MMU-1462054">
    <property type="pathway name" value="Alpha-defensins"/>
</dbReference>
<dbReference type="Reactome" id="R-MMU-6798695">
    <property type="pathway name" value="Neutrophil degranulation"/>
</dbReference>
<dbReference type="Proteomes" id="UP000000589">
    <property type="component" value="Unplaced"/>
</dbReference>
<dbReference type="RNAct" id="Q64016">
    <property type="molecule type" value="protein"/>
</dbReference>
<dbReference type="GO" id="GO:0005615">
    <property type="term" value="C:extracellular space"/>
    <property type="evidence" value="ECO:0007669"/>
    <property type="project" value="InterPro"/>
</dbReference>
<dbReference type="GO" id="GO:0042742">
    <property type="term" value="P:defense response to bacterium"/>
    <property type="evidence" value="ECO:0007669"/>
    <property type="project" value="UniProtKB-KW"/>
</dbReference>
<dbReference type="InterPro" id="IPR016327">
    <property type="entry name" value="Alpha-defensin"/>
</dbReference>
<dbReference type="InterPro" id="IPR006081">
    <property type="entry name" value="Alpha-defensin_C"/>
</dbReference>
<dbReference type="InterPro" id="IPR002366">
    <property type="entry name" value="Alpha-defensin_N"/>
</dbReference>
<dbReference type="InterPro" id="IPR006080">
    <property type="entry name" value="Beta/alpha-defensin_C"/>
</dbReference>
<dbReference type="PANTHER" id="PTHR11876">
    <property type="entry name" value="ALPHA-DEFENSIN 1"/>
    <property type="match status" value="1"/>
</dbReference>
<dbReference type="PANTHER" id="PTHR11876:SF2">
    <property type="entry name" value="ALPHA-DEFENSIN 1-RELATED"/>
    <property type="match status" value="1"/>
</dbReference>
<dbReference type="Pfam" id="PF00323">
    <property type="entry name" value="Defensin_1"/>
    <property type="match status" value="1"/>
</dbReference>
<dbReference type="Pfam" id="PF00879">
    <property type="entry name" value="Defensin_propep"/>
    <property type="match status" value="1"/>
</dbReference>
<dbReference type="PIRSF" id="PIRSF001875">
    <property type="entry name" value="Alpha-defensin"/>
    <property type="match status" value="1"/>
</dbReference>
<dbReference type="SMART" id="SM01418">
    <property type="entry name" value="Defensin_propep"/>
    <property type="match status" value="1"/>
</dbReference>
<dbReference type="SMART" id="SM00048">
    <property type="entry name" value="DEFSN"/>
    <property type="match status" value="1"/>
</dbReference>
<dbReference type="SUPFAM" id="SSF57392">
    <property type="entry name" value="Defensin-like"/>
    <property type="match status" value="1"/>
</dbReference>
<dbReference type="PROSITE" id="PS00269">
    <property type="entry name" value="DEFENSIN"/>
    <property type="match status" value="1"/>
</dbReference>
<feature type="signal peptide" evidence="2">
    <location>
        <begin position="1" status="less than"/>
        <end position="8"/>
    </location>
</feature>
<feature type="propeptide" id="PRO_0000006847" evidence="1">
    <location>
        <begin position="9"/>
        <end position="47"/>
    </location>
</feature>
<feature type="peptide" id="PRO_0000006848" description="Alpha-defensin 17">
    <location>
        <begin position="48"/>
        <end position="82"/>
    </location>
</feature>
<feature type="region of interest" description="Disordered" evidence="3">
    <location>
        <begin position="1"/>
        <end position="43"/>
    </location>
</feature>
<feature type="disulfide bond" evidence="1">
    <location>
        <begin position="53"/>
        <end position="81"/>
    </location>
</feature>
<feature type="disulfide bond" evidence="1">
    <location>
        <begin position="55"/>
        <end position="70"/>
    </location>
</feature>
<feature type="disulfide bond" evidence="1">
    <location>
        <begin position="60"/>
        <end position="80"/>
    </location>
</feature>
<feature type="non-terminal residue">
    <location>
        <position position="1"/>
    </location>
</feature>
<proteinExistence type="evidence at transcript level"/>
<name>DFA17_MOUSE</name>